<proteinExistence type="inferred from homology"/>
<gene>
    <name evidence="1" type="primary">tdk</name>
    <name type="ordered locus">MHP7448_0608</name>
</gene>
<reference key="1">
    <citation type="journal article" date="2005" name="J. Bacteriol.">
        <title>Swine and poultry pathogens: the complete genome sequences of two strains of Mycoplasma hyopneumoniae and a strain of Mycoplasma synoviae.</title>
        <authorList>
            <person name="Vasconcelos A.T.R."/>
            <person name="Ferreira H.B."/>
            <person name="Bizarro C.V."/>
            <person name="Bonatto S.L."/>
            <person name="Carvalho M.O."/>
            <person name="Pinto P.M."/>
            <person name="Almeida D.F."/>
            <person name="Almeida L.G.P."/>
            <person name="Almeida R."/>
            <person name="Alves-Junior L."/>
            <person name="Assuncao E.N."/>
            <person name="Azevedo V.A.C."/>
            <person name="Bogo M.R."/>
            <person name="Brigido M.M."/>
            <person name="Brocchi M."/>
            <person name="Burity H.A."/>
            <person name="Camargo A.A."/>
            <person name="Camargo S.S."/>
            <person name="Carepo M.S."/>
            <person name="Carraro D.M."/>
            <person name="de Mattos Cascardo J.C."/>
            <person name="Castro L.A."/>
            <person name="Cavalcanti G."/>
            <person name="Chemale G."/>
            <person name="Collevatti R.G."/>
            <person name="Cunha C.W."/>
            <person name="Dallagiovanna B."/>
            <person name="Dambros B.P."/>
            <person name="Dellagostin O.A."/>
            <person name="Falcao C."/>
            <person name="Fantinatti-Garboggini F."/>
            <person name="Felipe M.S.S."/>
            <person name="Fiorentin L."/>
            <person name="Franco G.R."/>
            <person name="Freitas N.S.A."/>
            <person name="Frias D."/>
            <person name="Grangeiro T.B."/>
            <person name="Grisard E.C."/>
            <person name="Guimaraes C.T."/>
            <person name="Hungria M."/>
            <person name="Jardim S.N."/>
            <person name="Krieger M.A."/>
            <person name="Laurino J.P."/>
            <person name="Lima L.F.A."/>
            <person name="Lopes M.I."/>
            <person name="Loreto E.L.S."/>
            <person name="Madeira H.M.F."/>
            <person name="Manfio G.P."/>
            <person name="Maranhao A.Q."/>
            <person name="Martinkovics C.T."/>
            <person name="Medeiros S.R.B."/>
            <person name="Moreira M.A.M."/>
            <person name="Neiva M."/>
            <person name="Ramalho-Neto C.E."/>
            <person name="Nicolas M.F."/>
            <person name="Oliveira S.C."/>
            <person name="Paixao R.F.C."/>
            <person name="Pedrosa F.O."/>
            <person name="Pena S.D.J."/>
            <person name="Pereira M."/>
            <person name="Pereira-Ferrari L."/>
            <person name="Piffer I."/>
            <person name="Pinto L.S."/>
            <person name="Potrich D.P."/>
            <person name="Salim A.C.M."/>
            <person name="Santos F.R."/>
            <person name="Schmitt R."/>
            <person name="Schneider M.P.C."/>
            <person name="Schrank A."/>
            <person name="Schrank I.S."/>
            <person name="Schuck A.F."/>
            <person name="Seuanez H.N."/>
            <person name="Silva D.W."/>
            <person name="Silva R."/>
            <person name="Silva S.C."/>
            <person name="Soares C.M.A."/>
            <person name="Souza K.R.L."/>
            <person name="Souza R.C."/>
            <person name="Staats C.C."/>
            <person name="Steffens M.B.R."/>
            <person name="Teixeira S.M.R."/>
            <person name="Urmenyi T.P."/>
            <person name="Vainstein M.H."/>
            <person name="Zuccherato L.W."/>
            <person name="Simpson A.J.G."/>
            <person name="Zaha A."/>
        </authorList>
    </citation>
    <scope>NUCLEOTIDE SEQUENCE [LARGE SCALE GENOMIC DNA]</scope>
    <source>
        <strain>7448</strain>
    </source>
</reference>
<sequence>MYKKFFDGVIEVITGPMFSGKSDELIKRIKILTYADIKTLVIKPSVDYRFSQCEIVSRSGLKIPTFLARTTQEIRDLFTRDNYQAIAIDEIQFFDEEIVTFLEQIADKGIRVIVSGLDQDFRRKPFGSLPNLMAIAENVTKLQAVCSLCKRAATTTARKVLNEAQTLIGDQDEYEARCRACHSL</sequence>
<keyword id="KW-0067">ATP-binding</keyword>
<keyword id="KW-0963">Cytoplasm</keyword>
<keyword id="KW-0237">DNA synthesis</keyword>
<keyword id="KW-0418">Kinase</keyword>
<keyword id="KW-0479">Metal-binding</keyword>
<keyword id="KW-0547">Nucleotide-binding</keyword>
<keyword id="KW-0808">Transferase</keyword>
<keyword id="KW-0862">Zinc</keyword>
<name>KITH_MESH7</name>
<comment type="catalytic activity">
    <reaction evidence="1">
        <text>thymidine + ATP = dTMP + ADP + H(+)</text>
        <dbReference type="Rhea" id="RHEA:19129"/>
        <dbReference type="ChEBI" id="CHEBI:15378"/>
        <dbReference type="ChEBI" id="CHEBI:17748"/>
        <dbReference type="ChEBI" id="CHEBI:30616"/>
        <dbReference type="ChEBI" id="CHEBI:63528"/>
        <dbReference type="ChEBI" id="CHEBI:456216"/>
        <dbReference type="EC" id="2.7.1.21"/>
    </reaction>
</comment>
<comment type="subunit">
    <text evidence="1">Homotetramer.</text>
</comment>
<comment type="subcellular location">
    <subcellularLocation>
        <location evidence="1">Cytoplasm</location>
    </subcellularLocation>
</comment>
<comment type="similarity">
    <text evidence="1">Belongs to the thymidine kinase family.</text>
</comment>
<evidence type="ECO:0000255" key="1">
    <source>
        <dbReference type="HAMAP-Rule" id="MF_00124"/>
    </source>
</evidence>
<protein>
    <recommendedName>
        <fullName evidence="1">Thymidine kinase</fullName>
        <ecNumber evidence="1">2.7.1.21</ecNumber>
    </recommendedName>
</protein>
<organism>
    <name type="scientific">Mesomycoplasma hyopneumoniae (strain 7448)</name>
    <name type="common">Mycoplasma hyopneumoniae</name>
    <dbReference type="NCBI Taxonomy" id="262722"/>
    <lineage>
        <taxon>Bacteria</taxon>
        <taxon>Bacillati</taxon>
        <taxon>Mycoplasmatota</taxon>
        <taxon>Mycoplasmoidales</taxon>
        <taxon>Metamycoplasmataceae</taxon>
        <taxon>Mesomycoplasma</taxon>
    </lineage>
</organism>
<accession>Q4A7B8</accession>
<dbReference type="EC" id="2.7.1.21" evidence="1"/>
<dbReference type="EMBL" id="AE017244">
    <property type="protein sequence ID" value="AAZ53971.1"/>
    <property type="molecule type" value="Genomic_DNA"/>
</dbReference>
<dbReference type="RefSeq" id="WP_011206458.1">
    <property type="nucleotide sequence ID" value="NC_007332.1"/>
</dbReference>
<dbReference type="SMR" id="Q4A7B8"/>
<dbReference type="KEGG" id="mhp:MHP7448_0608"/>
<dbReference type="HOGENOM" id="CLU_064400_3_0_14"/>
<dbReference type="Proteomes" id="UP000000553">
    <property type="component" value="Chromosome"/>
</dbReference>
<dbReference type="GO" id="GO:0005737">
    <property type="term" value="C:cytoplasm"/>
    <property type="evidence" value="ECO:0007669"/>
    <property type="project" value="UniProtKB-SubCell"/>
</dbReference>
<dbReference type="GO" id="GO:0005524">
    <property type="term" value="F:ATP binding"/>
    <property type="evidence" value="ECO:0007669"/>
    <property type="project" value="UniProtKB-UniRule"/>
</dbReference>
<dbReference type="GO" id="GO:0004797">
    <property type="term" value="F:thymidine kinase activity"/>
    <property type="evidence" value="ECO:0007669"/>
    <property type="project" value="UniProtKB-UniRule"/>
</dbReference>
<dbReference type="GO" id="GO:0008270">
    <property type="term" value="F:zinc ion binding"/>
    <property type="evidence" value="ECO:0007669"/>
    <property type="project" value="UniProtKB-UniRule"/>
</dbReference>
<dbReference type="GO" id="GO:0071897">
    <property type="term" value="P:DNA biosynthetic process"/>
    <property type="evidence" value="ECO:0007669"/>
    <property type="project" value="UniProtKB-KW"/>
</dbReference>
<dbReference type="GO" id="GO:0046104">
    <property type="term" value="P:thymidine metabolic process"/>
    <property type="evidence" value="ECO:0007669"/>
    <property type="project" value="TreeGrafter"/>
</dbReference>
<dbReference type="Gene3D" id="3.30.60.20">
    <property type="match status" value="1"/>
</dbReference>
<dbReference type="Gene3D" id="3.40.50.300">
    <property type="entry name" value="P-loop containing nucleotide triphosphate hydrolases"/>
    <property type="match status" value="1"/>
</dbReference>
<dbReference type="HAMAP" id="MF_00124">
    <property type="entry name" value="Thymidine_kinase"/>
    <property type="match status" value="1"/>
</dbReference>
<dbReference type="InterPro" id="IPR027417">
    <property type="entry name" value="P-loop_NTPase"/>
</dbReference>
<dbReference type="InterPro" id="IPR001267">
    <property type="entry name" value="Thymidine_kinase"/>
</dbReference>
<dbReference type="InterPro" id="IPR020633">
    <property type="entry name" value="Thymidine_kinase_CS"/>
</dbReference>
<dbReference type="NCBIfam" id="NF003296">
    <property type="entry name" value="PRK04296.1-1"/>
    <property type="match status" value="1"/>
</dbReference>
<dbReference type="PANTHER" id="PTHR11441">
    <property type="entry name" value="THYMIDINE KINASE"/>
    <property type="match status" value="1"/>
</dbReference>
<dbReference type="PANTHER" id="PTHR11441:SF0">
    <property type="entry name" value="THYMIDINE KINASE, CYTOSOLIC"/>
    <property type="match status" value="1"/>
</dbReference>
<dbReference type="Pfam" id="PF00265">
    <property type="entry name" value="TK"/>
    <property type="match status" value="1"/>
</dbReference>
<dbReference type="PIRSF" id="PIRSF035805">
    <property type="entry name" value="TK_cell"/>
    <property type="match status" value="1"/>
</dbReference>
<dbReference type="SUPFAM" id="SSF57716">
    <property type="entry name" value="Glucocorticoid receptor-like (DNA-binding domain)"/>
    <property type="match status" value="1"/>
</dbReference>
<dbReference type="SUPFAM" id="SSF52540">
    <property type="entry name" value="P-loop containing nucleoside triphosphate hydrolases"/>
    <property type="match status" value="1"/>
</dbReference>
<dbReference type="PROSITE" id="PS00603">
    <property type="entry name" value="TK_CELLULAR_TYPE"/>
    <property type="match status" value="1"/>
</dbReference>
<feature type="chain" id="PRO_0000242796" description="Thymidine kinase">
    <location>
        <begin position="1"/>
        <end position="184"/>
    </location>
</feature>
<feature type="active site" description="Proton acceptor" evidence="1">
    <location>
        <position position="90"/>
    </location>
</feature>
<feature type="binding site" evidence="1">
    <location>
        <begin position="15"/>
        <end position="22"/>
    </location>
    <ligand>
        <name>ATP</name>
        <dbReference type="ChEBI" id="CHEBI:30616"/>
    </ligand>
</feature>
<feature type="binding site" evidence="1">
    <location>
        <begin position="89"/>
        <end position="92"/>
    </location>
    <ligand>
        <name>ATP</name>
        <dbReference type="ChEBI" id="CHEBI:30616"/>
    </ligand>
</feature>
<feature type="binding site" evidence="1">
    <location>
        <position position="146"/>
    </location>
    <ligand>
        <name>Zn(2+)</name>
        <dbReference type="ChEBI" id="CHEBI:29105"/>
    </ligand>
</feature>
<feature type="binding site" evidence="1">
    <location>
        <position position="149"/>
    </location>
    <ligand>
        <name>Zn(2+)</name>
        <dbReference type="ChEBI" id="CHEBI:29105"/>
    </ligand>
</feature>
<feature type="binding site" evidence="1">
    <location>
        <position position="178"/>
    </location>
    <ligand>
        <name>Zn(2+)</name>
        <dbReference type="ChEBI" id="CHEBI:29105"/>
    </ligand>
</feature>
<feature type="binding site" evidence="1">
    <location>
        <position position="181"/>
    </location>
    <ligand>
        <name>Zn(2+)</name>
        <dbReference type="ChEBI" id="CHEBI:29105"/>
    </ligand>
</feature>